<accession>B0BC73</accession>
<sequence length="105" mass="11869">MKQQKQRIRIRLKGFDQGQLDQSTANIVETAKRTGARVVGPIPLPTKREVYTVLRSPHVDKKSREQFEIRTHKRLIDILDPTGKTIDALKMLSLPAGVDIKIKAA</sequence>
<dbReference type="EMBL" id="AM884177">
    <property type="protein sequence ID" value="CAP07088.1"/>
    <property type="molecule type" value="Genomic_DNA"/>
</dbReference>
<dbReference type="RefSeq" id="WP_009871791.1">
    <property type="nucleotide sequence ID" value="NC_010280.2"/>
</dbReference>
<dbReference type="SMR" id="B0BC73"/>
<dbReference type="GeneID" id="93065269"/>
<dbReference type="KEGG" id="ctl:CTLon_0691"/>
<dbReference type="HOGENOM" id="CLU_122625_1_3_0"/>
<dbReference type="Proteomes" id="UP001154401">
    <property type="component" value="Chromosome"/>
</dbReference>
<dbReference type="GO" id="GO:1990904">
    <property type="term" value="C:ribonucleoprotein complex"/>
    <property type="evidence" value="ECO:0007669"/>
    <property type="project" value="UniProtKB-KW"/>
</dbReference>
<dbReference type="GO" id="GO:0005840">
    <property type="term" value="C:ribosome"/>
    <property type="evidence" value="ECO:0007669"/>
    <property type="project" value="UniProtKB-KW"/>
</dbReference>
<dbReference type="GO" id="GO:0003735">
    <property type="term" value="F:structural constituent of ribosome"/>
    <property type="evidence" value="ECO:0007669"/>
    <property type="project" value="InterPro"/>
</dbReference>
<dbReference type="GO" id="GO:0000049">
    <property type="term" value="F:tRNA binding"/>
    <property type="evidence" value="ECO:0007669"/>
    <property type="project" value="UniProtKB-UniRule"/>
</dbReference>
<dbReference type="GO" id="GO:0006412">
    <property type="term" value="P:translation"/>
    <property type="evidence" value="ECO:0007669"/>
    <property type="project" value="UniProtKB-UniRule"/>
</dbReference>
<dbReference type="FunFam" id="3.30.70.600:FF:000001">
    <property type="entry name" value="30S ribosomal protein S10"/>
    <property type="match status" value="1"/>
</dbReference>
<dbReference type="Gene3D" id="3.30.70.600">
    <property type="entry name" value="Ribosomal protein S10 domain"/>
    <property type="match status" value="1"/>
</dbReference>
<dbReference type="HAMAP" id="MF_00508">
    <property type="entry name" value="Ribosomal_uS10"/>
    <property type="match status" value="1"/>
</dbReference>
<dbReference type="InterPro" id="IPR001848">
    <property type="entry name" value="Ribosomal_uS10"/>
</dbReference>
<dbReference type="InterPro" id="IPR018268">
    <property type="entry name" value="Ribosomal_uS10_CS"/>
</dbReference>
<dbReference type="InterPro" id="IPR027486">
    <property type="entry name" value="Ribosomal_uS10_dom"/>
</dbReference>
<dbReference type="InterPro" id="IPR036838">
    <property type="entry name" value="Ribosomal_uS10_dom_sf"/>
</dbReference>
<dbReference type="NCBIfam" id="NF001861">
    <property type="entry name" value="PRK00596.1"/>
    <property type="match status" value="1"/>
</dbReference>
<dbReference type="NCBIfam" id="TIGR01049">
    <property type="entry name" value="rpsJ_bact"/>
    <property type="match status" value="1"/>
</dbReference>
<dbReference type="PANTHER" id="PTHR11700">
    <property type="entry name" value="30S RIBOSOMAL PROTEIN S10 FAMILY MEMBER"/>
    <property type="match status" value="1"/>
</dbReference>
<dbReference type="Pfam" id="PF00338">
    <property type="entry name" value="Ribosomal_S10"/>
    <property type="match status" value="1"/>
</dbReference>
<dbReference type="PRINTS" id="PR00971">
    <property type="entry name" value="RIBOSOMALS10"/>
</dbReference>
<dbReference type="SMART" id="SM01403">
    <property type="entry name" value="Ribosomal_S10"/>
    <property type="match status" value="1"/>
</dbReference>
<dbReference type="SUPFAM" id="SSF54999">
    <property type="entry name" value="Ribosomal protein S10"/>
    <property type="match status" value="1"/>
</dbReference>
<dbReference type="PROSITE" id="PS00361">
    <property type="entry name" value="RIBOSOMAL_S10"/>
    <property type="match status" value="1"/>
</dbReference>
<proteinExistence type="inferred from homology"/>
<name>RS10_CHLTB</name>
<comment type="function">
    <text evidence="1">Involved in the binding of tRNA to the ribosomes.</text>
</comment>
<comment type="subunit">
    <text evidence="1">Part of the 30S ribosomal subunit.</text>
</comment>
<comment type="similarity">
    <text evidence="1">Belongs to the universal ribosomal protein uS10 family.</text>
</comment>
<gene>
    <name evidence="1" type="primary">rpsJ</name>
    <name type="ordered locus">CTLon_0691</name>
</gene>
<keyword id="KW-0687">Ribonucleoprotein</keyword>
<keyword id="KW-0689">Ribosomal protein</keyword>
<reference key="1">
    <citation type="journal article" date="2008" name="Genome Res.">
        <title>Chlamydia trachomatis: genome sequence analysis of lymphogranuloma venereum isolates.</title>
        <authorList>
            <person name="Thomson N.R."/>
            <person name="Holden M.T.G."/>
            <person name="Carder C."/>
            <person name="Lennard N."/>
            <person name="Lockey S.J."/>
            <person name="Marsh P."/>
            <person name="Skipp P."/>
            <person name="O'Connor C.D."/>
            <person name="Goodhead I."/>
            <person name="Norbertzcak H."/>
            <person name="Harris B."/>
            <person name="Ormond D."/>
            <person name="Rance R."/>
            <person name="Quail M.A."/>
            <person name="Parkhill J."/>
            <person name="Stephens R.S."/>
            <person name="Clarke I.N."/>
        </authorList>
    </citation>
    <scope>NUCLEOTIDE SEQUENCE [LARGE SCALE GENOMIC DNA]</scope>
    <source>
        <strain>UCH-1/proctitis</strain>
    </source>
</reference>
<feature type="chain" id="PRO_1000127102" description="Small ribosomal subunit protein uS10">
    <location>
        <begin position="1"/>
        <end position="105"/>
    </location>
</feature>
<protein>
    <recommendedName>
        <fullName evidence="1">Small ribosomal subunit protein uS10</fullName>
    </recommendedName>
    <alternativeName>
        <fullName evidence="2">30S ribosomal protein S10</fullName>
    </alternativeName>
</protein>
<organism>
    <name type="scientific">Chlamydia trachomatis serovar L2b (strain UCH-1/proctitis)</name>
    <dbReference type="NCBI Taxonomy" id="471473"/>
    <lineage>
        <taxon>Bacteria</taxon>
        <taxon>Pseudomonadati</taxon>
        <taxon>Chlamydiota</taxon>
        <taxon>Chlamydiia</taxon>
        <taxon>Chlamydiales</taxon>
        <taxon>Chlamydiaceae</taxon>
        <taxon>Chlamydia/Chlamydophila group</taxon>
        <taxon>Chlamydia</taxon>
    </lineage>
</organism>
<evidence type="ECO:0000255" key="1">
    <source>
        <dbReference type="HAMAP-Rule" id="MF_00508"/>
    </source>
</evidence>
<evidence type="ECO:0000305" key="2"/>